<proteinExistence type="inferred from homology"/>
<organism>
    <name type="scientific">Picosynechococcus sp. (strain ATCC 27264 / PCC 7002 / PR-6)</name>
    <name type="common">Agmenellum quadruplicatum</name>
    <dbReference type="NCBI Taxonomy" id="32049"/>
    <lineage>
        <taxon>Bacteria</taxon>
        <taxon>Bacillati</taxon>
        <taxon>Cyanobacteriota</taxon>
        <taxon>Cyanophyceae</taxon>
        <taxon>Oscillatoriophycideae</taxon>
        <taxon>Chroococcales</taxon>
        <taxon>Geminocystaceae</taxon>
        <taxon>Picosynechococcus</taxon>
    </lineage>
</organism>
<gene>
    <name evidence="1" type="primary">ndhD2</name>
    <name type="ordered locus">SYNPCC7002_A2000</name>
</gene>
<comment type="function">
    <text evidence="1">NDH-1 shuttles electrons from NAD(P)H, via FMN and iron-sulfur (Fe-S) centers, to quinones in the respiratory chain. The immediate electron acceptor for the enzyme in this species is believed to be plastoquinone. Couples the redox reaction to proton translocation (for every two electrons transferred, four hydrogen ions are translocated across the cytoplasmic membrane), and thus conserves the redox energy in a proton gradient.</text>
</comment>
<comment type="catalytic activity">
    <reaction evidence="1">
        <text>a plastoquinone + NADH + (n+1) H(+)(in) = a plastoquinol + NAD(+) + n H(+)(out)</text>
        <dbReference type="Rhea" id="RHEA:42608"/>
        <dbReference type="Rhea" id="RHEA-COMP:9561"/>
        <dbReference type="Rhea" id="RHEA-COMP:9562"/>
        <dbReference type="ChEBI" id="CHEBI:15378"/>
        <dbReference type="ChEBI" id="CHEBI:17757"/>
        <dbReference type="ChEBI" id="CHEBI:57540"/>
        <dbReference type="ChEBI" id="CHEBI:57945"/>
        <dbReference type="ChEBI" id="CHEBI:62192"/>
    </reaction>
</comment>
<comment type="catalytic activity">
    <reaction evidence="1">
        <text>a plastoquinone + NADPH + (n+1) H(+)(in) = a plastoquinol + NADP(+) + n H(+)(out)</text>
        <dbReference type="Rhea" id="RHEA:42612"/>
        <dbReference type="Rhea" id="RHEA-COMP:9561"/>
        <dbReference type="Rhea" id="RHEA-COMP:9562"/>
        <dbReference type="ChEBI" id="CHEBI:15378"/>
        <dbReference type="ChEBI" id="CHEBI:17757"/>
        <dbReference type="ChEBI" id="CHEBI:57783"/>
        <dbReference type="ChEBI" id="CHEBI:58349"/>
        <dbReference type="ChEBI" id="CHEBI:62192"/>
    </reaction>
</comment>
<comment type="subcellular location">
    <subcellularLocation>
        <location evidence="1">Cellular thylakoid membrane</location>
        <topology evidence="1">Multi-pass membrane protein</topology>
    </subcellularLocation>
</comment>
<comment type="similarity">
    <text evidence="1">Belongs to the complex I subunit 4 family.</text>
</comment>
<name>NU4C2_PICP2</name>
<protein>
    <recommendedName>
        <fullName evidence="1">NAD(P)H-quinone oxidoreductase chain 4 2</fullName>
        <ecNumber evidence="1">7.1.1.-</ecNumber>
    </recommendedName>
    <alternativeName>
        <fullName evidence="1">NAD(P)H dehydrogenase I, chain 4 2</fullName>
    </alternativeName>
    <alternativeName>
        <fullName evidence="1">NDH-1, chain 4 2</fullName>
    </alternativeName>
</protein>
<dbReference type="EC" id="7.1.1.-" evidence="1"/>
<dbReference type="EMBL" id="AF381036">
    <property type="protein sequence ID" value="AAN03540.1"/>
    <property type="molecule type" value="Genomic_DNA"/>
</dbReference>
<dbReference type="EMBL" id="CP000951">
    <property type="protein sequence ID" value="ACA99986.1"/>
    <property type="molecule type" value="Genomic_DNA"/>
</dbReference>
<dbReference type="RefSeq" id="WP_012307609.1">
    <property type="nucleotide sequence ID" value="NZ_JAHHPU010000002.1"/>
</dbReference>
<dbReference type="SMR" id="Q8KX53"/>
<dbReference type="STRING" id="32049.SYNPCC7002_A2000"/>
<dbReference type="KEGG" id="syp:SYNPCC7002_A2000"/>
<dbReference type="eggNOG" id="COG1008">
    <property type="taxonomic scope" value="Bacteria"/>
</dbReference>
<dbReference type="HOGENOM" id="CLU_007100_4_0_3"/>
<dbReference type="Proteomes" id="UP000001688">
    <property type="component" value="Chromosome"/>
</dbReference>
<dbReference type="GO" id="GO:0031676">
    <property type="term" value="C:plasma membrane-derived thylakoid membrane"/>
    <property type="evidence" value="ECO:0007669"/>
    <property type="project" value="UniProtKB-SubCell"/>
</dbReference>
<dbReference type="GO" id="GO:0008137">
    <property type="term" value="F:NADH dehydrogenase (ubiquinone) activity"/>
    <property type="evidence" value="ECO:0007669"/>
    <property type="project" value="InterPro"/>
</dbReference>
<dbReference type="GO" id="GO:0048039">
    <property type="term" value="F:ubiquinone binding"/>
    <property type="evidence" value="ECO:0007669"/>
    <property type="project" value="TreeGrafter"/>
</dbReference>
<dbReference type="GO" id="GO:0042773">
    <property type="term" value="P:ATP synthesis coupled electron transport"/>
    <property type="evidence" value="ECO:0007669"/>
    <property type="project" value="InterPro"/>
</dbReference>
<dbReference type="GO" id="GO:0015990">
    <property type="term" value="P:electron transport coupled proton transport"/>
    <property type="evidence" value="ECO:0007669"/>
    <property type="project" value="TreeGrafter"/>
</dbReference>
<dbReference type="HAMAP" id="MF_00491">
    <property type="entry name" value="NDH1_NuoM"/>
    <property type="match status" value="1"/>
</dbReference>
<dbReference type="InterPro" id="IPR022997">
    <property type="entry name" value="NADH_Q_OxRdtase_chain4"/>
</dbReference>
<dbReference type="InterPro" id="IPR010227">
    <property type="entry name" value="NADH_Q_OxRdtase_chainM/4"/>
</dbReference>
<dbReference type="InterPro" id="IPR003918">
    <property type="entry name" value="NADH_UbQ_OxRdtase"/>
</dbReference>
<dbReference type="InterPro" id="IPR001750">
    <property type="entry name" value="ND/Mrp_TM"/>
</dbReference>
<dbReference type="NCBIfam" id="TIGR01972">
    <property type="entry name" value="NDH_I_M"/>
    <property type="match status" value="1"/>
</dbReference>
<dbReference type="NCBIfam" id="NF002713">
    <property type="entry name" value="PRK02546.1"/>
    <property type="match status" value="1"/>
</dbReference>
<dbReference type="NCBIfam" id="NF009212">
    <property type="entry name" value="PRK12561.1"/>
    <property type="match status" value="1"/>
</dbReference>
<dbReference type="PANTHER" id="PTHR43507:SF21">
    <property type="entry name" value="NAD(P)H-QUINONE OXIDOREDUCTASE CHAIN 4, CHLOROPLASTIC"/>
    <property type="match status" value="1"/>
</dbReference>
<dbReference type="PANTHER" id="PTHR43507">
    <property type="entry name" value="NADH-UBIQUINONE OXIDOREDUCTASE CHAIN 4"/>
    <property type="match status" value="1"/>
</dbReference>
<dbReference type="Pfam" id="PF00361">
    <property type="entry name" value="Proton_antipo_M"/>
    <property type="match status" value="1"/>
</dbReference>
<dbReference type="PRINTS" id="PR01437">
    <property type="entry name" value="NUOXDRDTASE4"/>
</dbReference>
<feature type="chain" id="PRO_0000343249" description="NAD(P)H-quinone oxidoreductase chain 4 2">
    <location>
        <begin position="1"/>
        <end position="526"/>
    </location>
</feature>
<feature type="transmembrane region" description="Helical" evidence="1">
    <location>
        <begin position="6"/>
        <end position="26"/>
    </location>
</feature>
<feature type="transmembrane region" description="Helical" evidence="1">
    <location>
        <begin position="36"/>
        <end position="56"/>
    </location>
</feature>
<feature type="transmembrane region" description="Helical" evidence="1">
    <location>
        <begin position="91"/>
        <end position="111"/>
    </location>
</feature>
<feature type="transmembrane region" description="Helical" evidence="1">
    <location>
        <begin position="113"/>
        <end position="133"/>
    </location>
</feature>
<feature type="transmembrane region" description="Helical" evidence="1">
    <location>
        <begin position="137"/>
        <end position="157"/>
    </location>
</feature>
<feature type="transmembrane region" description="Helical" evidence="1">
    <location>
        <begin position="169"/>
        <end position="189"/>
    </location>
</feature>
<feature type="transmembrane region" description="Helical" evidence="1">
    <location>
        <begin position="212"/>
        <end position="232"/>
    </location>
</feature>
<feature type="transmembrane region" description="Helical" evidence="1">
    <location>
        <begin position="243"/>
        <end position="263"/>
    </location>
</feature>
<feature type="transmembrane region" description="Helical" evidence="1">
    <location>
        <begin position="275"/>
        <end position="295"/>
    </location>
</feature>
<feature type="transmembrane region" description="Helical" evidence="1">
    <location>
        <begin position="306"/>
        <end position="326"/>
    </location>
</feature>
<feature type="transmembrane region" description="Helical" evidence="1">
    <location>
        <begin position="332"/>
        <end position="352"/>
    </location>
</feature>
<feature type="transmembrane region" description="Helical" evidence="1">
    <location>
        <begin position="375"/>
        <end position="397"/>
    </location>
</feature>
<feature type="transmembrane region" description="Helical" evidence="1">
    <location>
        <begin position="417"/>
        <end position="437"/>
    </location>
</feature>
<feature type="transmembrane region" description="Helical" evidence="1">
    <location>
        <begin position="464"/>
        <end position="484"/>
    </location>
</feature>
<reference key="1">
    <citation type="submission" date="2001-05" db="EMBL/GenBank/DDBJ databases">
        <title>An analysis of forty genes encoding electron transport proteins from Synechococcus sp. PCC 7002: a comparative study of electron transport proteins from cyanobacteria and chloroplasts.</title>
        <authorList>
            <person name="Nomura C.T."/>
            <person name="Persson S."/>
            <person name="Zhao J."/>
            <person name="Bryant D.A."/>
        </authorList>
    </citation>
    <scope>NUCLEOTIDE SEQUENCE [GENOMIC DNA]</scope>
</reference>
<reference key="2">
    <citation type="submission" date="2008-02" db="EMBL/GenBank/DDBJ databases">
        <title>Complete sequence of Synechococcus sp. PCC 7002.</title>
        <authorList>
            <person name="Li T."/>
            <person name="Zhao J."/>
            <person name="Zhao C."/>
            <person name="Liu Z."/>
            <person name="Zhao F."/>
            <person name="Marquardt J."/>
            <person name="Nomura C.T."/>
            <person name="Persson S."/>
            <person name="Detter J.C."/>
            <person name="Richardson P.M."/>
            <person name="Lanz C."/>
            <person name="Schuster S.C."/>
            <person name="Wang J."/>
            <person name="Li S."/>
            <person name="Huang X."/>
            <person name="Cai T."/>
            <person name="Yu Z."/>
            <person name="Luo J."/>
            <person name="Zhao J."/>
            <person name="Bryant D.A."/>
        </authorList>
    </citation>
    <scope>NUCLEOTIDE SEQUENCE [LARGE SCALE GENOMIC DNA]</scope>
    <source>
        <strain>ATCC 27264 / PCC 7002 / PR-6</strain>
    </source>
</reference>
<accession>Q8KX53</accession>
<keyword id="KW-0472">Membrane</keyword>
<keyword id="KW-0520">NAD</keyword>
<keyword id="KW-0521">NADP</keyword>
<keyword id="KW-0618">Plastoquinone</keyword>
<keyword id="KW-0874">Quinone</keyword>
<keyword id="KW-1185">Reference proteome</keyword>
<keyword id="KW-0793">Thylakoid</keyword>
<keyword id="KW-1278">Translocase</keyword>
<keyword id="KW-0812">Transmembrane</keyword>
<keyword id="KW-1133">Transmembrane helix</keyword>
<sequence length="526" mass="57650">MNFANFPWLSTIILFPIIAALFLPLIPDKDGKTVRWYALTIGLIDFVIIVTAFYTGYDFGNPNLQLVESYTWVEAIDLRWSVGADGLSMPLILLTGFITTLAILAAWPVSFKPKLFYFLMLLMYGGQIAVFAVQDMLLFFFTWELELVPVYLILSIWGGKKRLYAATKFILYTAGGSLFILIAALTMAFYGDTVTFDMTAIAQKDFGINLQLLLYGGLLIAYGVKLPIFPLHTWLPDAHGEATAPAHMLLAGILLKMGGYALLRMNAGMLPDAHALFGPVLVILGVVNIVYAALTSFAQRNLKRKIAYSSISHMGFVLIGMASFTDLGTSGAMLQMISHGLIGASLFFMVGATYDRTHTLMLDEMGGVGKKMKKIFAMWTTCSMASLALPGMSGFVAELMVFVGFATSDAYSPTFRVIIVFLAAVGVILTPIYLLSMLREILYGPENKELVAHEKLIDAEPREVFVIACLLIPIIGIGLYPKAVTQIYASTTENLTAILRQSVPSLQQTAQAPSLDVAVLRAPEIR</sequence>
<evidence type="ECO:0000255" key="1">
    <source>
        <dbReference type="HAMAP-Rule" id="MF_00491"/>
    </source>
</evidence>